<gene>
    <name evidence="1" type="primary">rsmG</name>
    <name type="ordered locus">XC_4130</name>
</gene>
<accession>Q4UP54</accession>
<dbReference type="EC" id="2.1.1.170" evidence="1"/>
<dbReference type="EMBL" id="CP000050">
    <property type="protein sequence ID" value="AAY51169.1"/>
    <property type="molecule type" value="Genomic_DNA"/>
</dbReference>
<dbReference type="RefSeq" id="WP_011039110.1">
    <property type="nucleotide sequence ID" value="NZ_CP155948.1"/>
</dbReference>
<dbReference type="SMR" id="Q4UP54"/>
<dbReference type="KEGG" id="xcb:XC_4130"/>
<dbReference type="HOGENOM" id="CLU_065341_2_0_6"/>
<dbReference type="Proteomes" id="UP000000420">
    <property type="component" value="Chromosome"/>
</dbReference>
<dbReference type="GO" id="GO:0005829">
    <property type="term" value="C:cytosol"/>
    <property type="evidence" value="ECO:0007669"/>
    <property type="project" value="TreeGrafter"/>
</dbReference>
<dbReference type="GO" id="GO:0070043">
    <property type="term" value="F:rRNA (guanine-N7-)-methyltransferase activity"/>
    <property type="evidence" value="ECO:0007669"/>
    <property type="project" value="UniProtKB-UniRule"/>
</dbReference>
<dbReference type="FunFam" id="3.40.50.150:FF:000752">
    <property type="entry name" value="Ribosomal RNA small subunit methyltransferase G"/>
    <property type="match status" value="1"/>
</dbReference>
<dbReference type="Gene3D" id="3.40.50.150">
    <property type="entry name" value="Vaccinia Virus protein VP39"/>
    <property type="match status" value="1"/>
</dbReference>
<dbReference type="HAMAP" id="MF_00074">
    <property type="entry name" value="16SrRNA_methyltr_G"/>
    <property type="match status" value="1"/>
</dbReference>
<dbReference type="InterPro" id="IPR003682">
    <property type="entry name" value="rRNA_ssu_MeTfrase_G"/>
</dbReference>
<dbReference type="InterPro" id="IPR029063">
    <property type="entry name" value="SAM-dependent_MTases_sf"/>
</dbReference>
<dbReference type="NCBIfam" id="TIGR00138">
    <property type="entry name" value="rsmG_gidB"/>
    <property type="match status" value="1"/>
</dbReference>
<dbReference type="PANTHER" id="PTHR31760">
    <property type="entry name" value="S-ADENOSYL-L-METHIONINE-DEPENDENT METHYLTRANSFERASES SUPERFAMILY PROTEIN"/>
    <property type="match status" value="1"/>
</dbReference>
<dbReference type="PANTHER" id="PTHR31760:SF0">
    <property type="entry name" value="S-ADENOSYL-L-METHIONINE-DEPENDENT METHYLTRANSFERASES SUPERFAMILY PROTEIN"/>
    <property type="match status" value="1"/>
</dbReference>
<dbReference type="Pfam" id="PF02527">
    <property type="entry name" value="GidB"/>
    <property type="match status" value="1"/>
</dbReference>
<dbReference type="PIRSF" id="PIRSF003078">
    <property type="entry name" value="GidB"/>
    <property type="match status" value="1"/>
</dbReference>
<dbReference type="SUPFAM" id="SSF53335">
    <property type="entry name" value="S-adenosyl-L-methionine-dependent methyltransferases"/>
    <property type="match status" value="1"/>
</dbReference>
<protein>
    <recommendedName>
        <fullName evidence="1">Ribosomal RNA small subunit methyltransferase G</fullName>
        <ecNumber evidence="1">2.1.1.170</ecNumber>
    </recommendedName>
    <alternativeName>
        <fullName evidence="1">16S rRNA 7-methylguanosine methyltransferase</fullName>
        <shortName evidence="1">16S rRNA m7G methyltransferase</shortName>
    </alternativeName>
</protein>
<sequence length="212" mass="22682">MNDAALPPDVSAALANGLQAQSLDADFAAPLLRYLTLLVRWNKTYNLTAVRDPREMVTRHLLDSLAMQPYIVSGTLADLGTGPGLPGIPLAITRPQLQVTLVESNGKKARFMREALRHLALGNARVAEARAEAVDEPAAYDHLTARALDTLAGIIAVGGHLLRPGGSLLAMKGVYPHEEIAALPAGWRVGEVHPLQVPGLDGERHLVVVHKD</sequence>
<evidence type="ECO:0000255" key="1">
    <source>
        <dbReference type="HAMAP-Rule" id="MF_00074"/>
    </source>
</evidence>
<keyword id="KW-0963">Cytoplasm</keyword>
<keyword id="KW-0489">Methyltransferase</keyword>
<keyword id="KW-0698">rRNA processing</keyword>
<keyword id="KW-0949">S-adenosyl-L-methionine</keyword>
<keyword id="KW-0808">Transferase</keyword>
<comment type="function">
    <text evidence="1">Specifically methylates the N7 position of guanine in position 527 of 16S rRNA.</text>
</comment>
<comment type="catalytic activity">
    <reaction evidence="1">
        <text>guanosine(527) in 16S rRNA + S-adenosyl-L-methionine = N(7)-methylguanosine(527) in 16S rRNA + S-adenosyl-L-homocysteine</text>
        <dbReference type="Rhea" id="RHEA:42732"/>
        <dbReference type="Rhea" id="RHEA-COMP:10209"/>
        <dbReference type="Rhea" id="RHEA-COMP:10210"/>
        <dbReference type="ChEBI" id="CHEBI:57856"/>
        <dbReference type="ChEBI" id="CHEBI:59789"/>
        <dbReference type="ChEBI" id="CHEBI:74269"/>
        <dbReference type="ChEBI" id="CHEBI:74480"/>
        <dbReference type="EC" id="2.1.1.170"/>
    </reaction>
</comment>
<comment type="subcellular location">
    <subcellularLocation>
        <location evidence="1">Cytoplasm</location>
    </subcellularLocation>
</comment>
<comment type="similarity">
    <text evidence="1">Belongs to the methyltransferase superfamily. RNA methyltransferase RsmG family.</text>
</comment>
<feature type="chain" id="PRO_0000184370" description="Ribosomal RNA small subunit methyltransferase G">
    <location>
        <begin position="1"/>
        <end position="212"/>
    </location>
</feature>
<feature type="binding site" evidence="1">
    <location>
        <position position="80"/>
    </location>
    <ligand>
        <name>S-adenosyl-L-methionine</name>
        <dbReference type="ChEBI" id="CHEBI:59789"/>
    </ligand>
</feature>
<feature type="binding site" evidence="1">
    <location>
        <position position="85"/>
    </location>
    <ligand>
        <name>S-adenosyl-L-methionine</name>
        <dbReference type="ChEBI" id="CHEBI:59789"/>
    </ligand>
</feature>
<feature type="binding site" evidence="1">
    <location>
        <begin position="131"/>
        <end position="132"/>
    </location>
    <ligand>
        <name>S-adenosyl-L-methionine</name>
        <dbReference type="ChEBI" id="CHEBI:59789"/>
    </ligand>
</feature>
<feature type="binding site" evidence="1">
    <location>
        <position position="146"/>
    </location>
    <ligand>
        <name>S-adenosyl-L-methionine</name>
        <dbReference type="ChEBI" id="CHEBI:59789"/>
    </ligand>
</feature>
<name>RSMG_XANC8</name>
<reference key="1">
    <citation type="journal article" date="2005" name="Genome Res.">
        <title>Comparative and functional genomic analyses of the pathogenicity of phytopathogen Xanthomonas campestris pv. campestris.</title>
        <authorList>
            <person name="Qian W."/>
            <person name="Jia Y."/>
            <person name="Ren S.-X."/>
            <person name="He Y.-Q."/>
            <person name="Feng J.-X."/>
            <person name="Lu L.-F."/>
            <person name="Sun Q."/>
            <person name="Ying G."/>
            <person name="Tang D.-J."/>
            <person name="Tang H."/>
            <person name="Wu W."/>
            <person name="Hao P."/>
            <person name="Wang L."/>
            <person name="Jiang B.-L."/>
            <person name="Zeng S."/>
            <person name="Gu W.-Y."/>
            <person name="Lu G."/>
            <person name="Rong L."/>
            <person name="Tian Y."/>
            <person name="Yao Z."/>
            <person name="Fu G."/>
            <person name="Chen B."/>
            <person name="Fang R."/>
            <person name="Qiang B."/>
            <person name="Chen Z."/>
            <person name="Zhao G.-P."/>
            <person name="Tang J.-L."/>
            <person name="He C."/>
        </authorList>
    </citation>
    <scope>NUCLEOTIDE SEQUENCE [LARGE SCALE GENOMIC DNA]</scope>
    <source>
        <strain>8004</strain>
    </source>
</reference>
<organism>
    <name type="scientific">Xanthomonas campestris pv. campestris (strain 8004)</name>
    <dbReference type="NCBI Taxonomy" id="314565"/>
    <lineage>
        <taxon>Bacteria</taxon>
        <taxon>Pseudomonadati</taxon>
        <taxon>Pseudomonadota</taxon>
        <taxon>Gammaproteobacteria</taxon>
        <taxon>Lysobacterales</taxon>
        <taxon>Lysobacteraceae</taxon>
        <taxon>Xanthomonas</taxon>
    </lineage>
</organism>
<proteinExistence type="inferred from homology"/>